<dbReference type="EC" id="3.6.1.11" evidence="3"/>
<dbReference type="EMBL" id="L06129">
    <property type="protein sequence ID" value="AAA24415.1"/>
    <property type="molecule type" value="Genomic_DNA"/>
</dbReference>
<dbReference type="EMBL" id="U00096">
    <property type="protein sequence ID" value="AAC75555.1"/>
    <property type="molecule type" value="Genomic_DNA"/>
</dbReference>
<dbReference type="EMBL" id="AP009048">
    <property type="protein sequence ID" value="BAA16390.1"/>
    <property type="molecule type" value="Genomic_DNA"/>
</dbReference>
<dbReference type="PIR" id="A45333">
    <property type="entry name" value="A45333"/>
</dbReference>
<dbReference type="RefSeq" id="NP_416997.1">
    <property type="nucleotide sequence ID" value="NC_000913.3"/>
</dbReference>
<dbReference type="RefSeq" id="WP_001121363.1">
    <property type="nucleotide sequence ID" value="NZ_STEB01000011.1"/>
</dbReference>
<dbReference type="PDB" id="1U6Z">
    <property type="method" value="X-ray"/>
    <property type="resolution" value="1.90 A"/>
    <property type="chains" value="A/B=1-513"/>
</dbReference>
<dbReference type="PDBsum" id="1U6Z"/>
<dbReference type="SMR" id="P0AFL6"/>
<dbReference type="BioGRID" id="4260594">
    <property type="interactions" value="17"/>
</dbReference>
<dbReference type="BioGRID" id="851309">
    <property type="interactions" value="3"/>
</dbReference>
<dbReference type="DIP" id="DIP-29140N"/>
<dbReference type="FunCoup" id="P0AFL6">
    <property type="interactions" value="407"/>
</dbReference>
<dbReference type="IntAct" id="P0AFL6">
    <property type="interactions" value="9"/>
</dbReference>
<dbReference type="STRING" id="511145.b2502"/>
<dbReference type="jPOST" id="P0AFL6"/>
<dbReference type="PaxDb" id="511145-b2502"/>
<dbReference type="EnsemblBacteria" id="AAC75555">
    <property type="protein sequence ID" value="AAC75555"/>
    <property type="gene ID" value="b2502"/>
</dbReference>
<dbReference type="GeneID" id="93774634"/>
<dbReference type="GeneID" id="946970"/>
<dbReference type="KEGG" id="ecj:JW2487"/>
<dbReference type="KEGG" id="eco:b2502"/>
<dbReference type="KEGG" id="ecoc:C3026_13875"/>
<dbReference type="PATRIC" id="fig|1411691.4.peg.4236"/>
<dbReference type="EchoBASE" id="EB1375"/>
<dbReference type="eggNOG" id="COG0248">
    <property type="taxonomic scope" value="Bacteria"/>
</dbReference>
<dbReference type="HOGENOM" id="CLU_025908_4_0_6"/>
<dbReference type="InParanoid" id="P0AFL6"/>
<dbReference type="OMA" id="RISEGCY"/>
<dbReference type="OrthoDB" id="9793035at2"/>
<dbReference type="PhylomeDB" id="P0AFL6"/>
<dbReference type="BioCyc" id="EcoCyc:PPX-MONOMER"/>
<dbReference type="BioCyc" id="MetaCyc:PPX-MONOMER"/>
<dbReference type="BRENDA" id="3.6.1.11">
    <property type="organism ID" value="2026"/>
</dbReference>
<dbReference type="EvolutionaryTrace" id="P0AFL6"/>
<dbReference type="PRO" id="PR:P0AFL6"/>
<dbReference type="Proteomes" id="UP000000625">
    <property type="component" value="Chromosome"/>
</dbReference>
<dbReference type="GO" id="GO:0005886">
    <property type="term" value="C:plasma membrane"/>
    <property type="evidence" value="ECO:0007669"/>
    <property type="project" value="UniProtKB-SubCell"/>
</dbReference>
<dbReference type="GO" id="GO:0004309">
    <property type="term" value="F:exopolyphosphatase activity"/>
    <property type="evidence" value="ECO:0000314"/>
    <property type="project" value="EcoCyc"/>
</dbReference>
<dbReference type="GO" id="GO:0097216">
    <property type="term" value="F:guanosine tetraphosphate binding"/>
    <property type="evidence" value="ECO:0000314"/>
    <property type="project" value="EcoCyc"/>
</dbReference>
<dbReference type="GO" id="GO:0042802">
    <property type="term" value="F:identical protein binding"/>
    <property type="evidence" value="ECO:0000353"/>
    <property type="project" value="IntAct"/>
</dbReference>
<dbReference type="GO" id="GO:0042803">
    <property type="term" value="F:protein homodimerization activity"/>
    <property type="evidence" value="ECO:0000314"/>
    <property type="project" value="EcoCyc"/>
</dbReference>
<dbReference type="GO" id="GO:0006798">
    <property type="term" value="P:polyphosphate catabolic process"/>
    <property type="evidence" value="ECO:0000315"/>
    <property type="project" value="EcoCyc"/>
</dbReference>
<dbReference type="CDD" id="cd24116">
    <property type="entry name" value="ASKHA_NBD_EcPPX-like"/>
    <property type="match status" value="1"/>
</dbReference>
<dbReference type="FunFam" id="1.10.3210.10:FF:000006">
    <property type="entry name" value="Exopolyphosphatase"/>
    <property type="match status" value="1"/>
</dbReference>
<dbReference type="FunFam" id="3.30.70.2260:FF:000001">
    <property type="entry name" value="Exopolyphosphatase"/>
    <property type="match status" value="1"/>
</dbReference>
<dbReference type="FunFam" id="3.30.420.150:FF:000001">
    <property type="entry name" value="Guanosine-5'-triphosphate,3'-diphosphate pyrophosphatase"/>
    <property type="match status" value="1"/>
</dbReference>
<dbReference type="FunFam" id="3.30.420.40:FF:000023">
    <property type="entry name" value="Guanosine-5'-triphosphate,3'-diphosphate pyrophosphatase"/>
    <property type="match status" value="1"/>
</dbReference>
<dbReference type="Gene3D" id="3.30.420.40">
    <property type="match status" value="1"/>
</dbReference>
<dbReference type="Gene3D" id="3.30.70.2260">
    <property type="match status" value="1"/>
</dbReference>
<dbReference type="Gene3D" id="3.30.420.150">
    <property type="entry name" value="Exopolyphosphatase. Domain 2"/>
    <property type="match status" value="1"/>
</dbReference>
<dbReference type="Gene3D" id="1.10.3210.10">
    <property type="entry name" value="Hypothetical protein af1432"/>
    <property type="match status" value="1"/>
</dbReference>
<dbReference type="InterPro" id="IPR043129">
    <property type="entry name" value="ATPase_NBD"/>
</dbReference>
<dbReference type="InterPro" id="IPR022371">
    <property type="entry name" value="Exopolyphosphatase"/>
</dbReference>
<dbReference type="InterPro" id="IPR050273">
    <property type="entry name" value="GppA/Ppx_hydrolase"/>
</dbReference>
<dbReference type="InterPro" id="IPR048950">
    <property type="entry name" value="Ppx_GppA_C"/>
</dbReference>
<dbReference type="InterPro" id="IPR003695">
    <property type="entry name" value="Ppx_GppA_N"/>
</dbReference>
<dbReference type="InterPro" id="IPR030673">
    <property type="entry name" value="PyroPPase_GppA_Ppx"/>
</dbReference>
<dbReference type="NCBIfam" id="TIGR03706">
    <property type="entry name" value="exo_poly_only"/>
    <property type="match status" value="1"/>
</dbReference>
<dbReference type="NCBIfam" id="NF008108">
    <property type="entry name" value="PRK10854.1"/>
    <property type="match status" value="1"/>
</dbReference>
<dbReference type="PANTHER" id="PTHR30005">
    <property type="entry name" value="EXOPOLYPHOSPHATASE"/>
    <property type="match status" value="1"/>
</dbReference>
<dbReference type="PANTHER" id="PTHR30005:SF14">
    <property type="entry name" value="EXOPOLYPHOSPHATASE"/>
    <property type="match status" value="1"/>
</dbReference>
<dbReference type="Pfam" id="PF02541">
    <property type="entry name" value="Ppx-GppA"/>
    <property type="match status" value="1"/>
</dbReference>
<dbReference type="Pfam" id="PF21447">
    <property type="entry name" value="Ppx-GppA_III"/>
    <property type="match status" value="1"/>
</dbReference>
<dbReference type="PIRSF" id="PIRSF001267">
    <property type="entry name" value="Pyrophosphatase_GppA_Ppx"/>
    <property type="match status" value="1"/>
</dbReference>
<dbReference type="SUPFAM" id="SSF53067">
    <property type="entry name" value="Actin-like ATPase domain"/>
    <property type="match status" value="2"/>
</dbReference>
<dbReference type="SUPFAM" id="SSF109604">
    <property type="entry name" value="HD-domain/PDEase-like"/>
    <property type="match status" value="1"/>
</dbReference>
<gene>
    <name evidence="5" type="primary">ppx</name>
    <name type="ordered locus">b2502</name>
    <name type="ordered locus">JW2487</name>
</gene>
<proteinExistence type="evidence at protein level"/>
<accession>P0AFL6</accession>
<accession>P29014</accession>
<accession>P76981</accession>
<reference key="1">
    <citation type="journal article" date="1993" name="J. Biol. Chem.">
        <title>An exopolyphosphatase of Escherichia coli. The enzyme and its ppx gene in a polyphosphate operon.</title>
        <authorList>
            <person name="Akiyama M."/>
            <person name="Crooke E."/>
            <person name="Kornberg A."/>
        </authorList>
    </citation>
    <scope>NUCLEOTIDE SEQUENCE [GENOMIC DNA]</scope>
    <scope>PROTEIN SEQUENCE OF 2-11</scope>
    <scope>FUNCTION</scope>
    <scope>CATALYTIC ACTIVITY</scope>
    <scope>COFACTOR</scope>
    <scope>ACTIVITY REGULATION</scope>
    <scope>BIOPHYSICOCHEMICAL PROPERTIES</scope>
    <scope>SUBUNIT</scope>
    <scope>SUBCELLULAR LOCATION</scope>
    <source>
        <strain>K12</strain>
    </source>
</reference>
<reference key="2">
    <citation type="journal article" date="1997" name="DNA Res.">
        <title>Construction of a contiguous 874-kb sequence of the Escherichia coli-K12 genome corresponding to 50.0-68.8 min on the linkage map and analysis of its sequence features.</title>
        <authorList>
            <person name="Yamamoto Y."/>
            <person name="Aiba H."/>
            <person name="Baba T."/>
            <person name="Hayashi K."/>
            <person name="Inada T."/>
            <person name="Isono K."/>
            <person name="Itoh T."/>
            <person name="Kimura S."/>
            <person name="Kitagawa M."/>
            <person name="Makino K."/>
            <person name="Miki T."/>
            <person name="Mitsuhashi N."/>
            <person name="Mizobuchi K."/>
            <person name="Mori H."/>
            <person name="Nakade S."/>
            <person name="Nakamura Y."/>
            <person name="Nashimoto H."/>
            <person name="Oshima T."/>
            <person name="Oyama S."/>
            <person name="Saito N."/>
            <person name="Sampei G."/>
            <person name="Satoh Y."/>
            <person name="Sivasundaram S."/>
            <person name="Tagami H."/>
            <person name="Takahashi H."/>
            <person name="Takeda J."/>
            <person name="Takemoto K."/>
            <person name="Uehara K."/>
            <person name="Wada C."/>
            <person name="Yamagata S."/>
            <person name="Horiuchi T."/>
        </authorList>
    </citation>
    <scope>NUCLEOTIDE SEQUENCE [LARGE SCALE GENOMIC DNA]</scope>
    <source>
        <strain>K12 / W3110 / ATCC 27325 / DSM 5911</strain>
    </source>
</reference>
<reference key="3">
    <citation type="journal article" date="1997" name="Science">
        <title>The complete genome sequence of Escherichia coli K-12.</title>
        <authorList>
            <person name="Blattner F.R."/>
            <person name="Plunkett G. III"/>
            <person name="Bloch C.A."/>
            <person name="Perna N.T."/>
            <person name="Burland V."/>
            <person name="Riley M."/>
            <person name="Collado-Vides J."/>
            <person name="Glasner J.D."/>
            <person name="Rode C.K."/>
            <person name="Mayhew G.F."/>
            <person name="Gregor J."/>
            <person name="Davis N.W."/>
            <person name="Kirkpatrick H.A."/>
            <person name="Goeden M.A."/>
            <person name="Rose D.J."/>
            <person name="Mau B."/>
            <person name="Shao Y."/>
        </authorList>
    </citation>
    <scope>NUCLEOTIDE SEQUENCE [LARGE SCALE GENOMIC DNA]</scope>
    <source>
        <strain>K12 / MG1655 / ATCC 47076</strain>
    </source>
</reference>
<reference key="4">
    <citation type="journal article" date="2006" name="Mol. Syst. Biol.">
        <title>Highly accurate genome sequences of Escherichia coli K-12 strains MG1655 and W3110.</title>
        <authorList>
            <person name="Hayashi K."/>
            <person name="Morooka N."/>
            <person name="Yamamoto Y."/>
            <person name="Fujita K."/>
            <person name="Isono K."/>
            <person name="Choi S."/>
            <person name="Ohtsubo E."/>
            <person name="Baba T."/>
            <person name="Wanner B.L."/>
            <person name="Mori H."/>
            <person name="Horiuchi T."/>
        </authorList>
    </citation>
    <scope>NUCLEOTIDE SEQUENCE [LARGE SCALE GENOMIC DNA]</scope>
    <source>
        <strain>K12 / W3110 / ATCC 27325 / DSM 5911</strain>
    </source>
</reference>
<reference key="5">
    <citation type="journal article" date="1993" name="Trends Biochem. Sci.">
        <title>Exopolyphosphate phosphatase and guanosine pentaphosphate phosphatase belong to the sugar kinase/actin/hsp 70 superfamily.</title>
        <authorList>
            <person name="Reizer J."/>
            <person name="Reizer A."/>
            <person name="Saier M.H. Jr."/>
            <person name="Bork B."/>
            <person name="Sander C."/>
        </authorList>
    </citation>
    <scope>SIMILARITY TO GPPA</scope>
</reference>
<reference key="6">
    <citation type="journal article" date="1997" name="Appl. Environ. Microbiol.">
        <title>Manipulation of independent synthesis and degradation of polyphosphate in Escherichia coli for investigation of phosphate secretion from the cell.</title>
        <authorList>
            <person name="Van Dien S.J."/>
            <person name="Keyhani S."/>
            <person name="Yang C."/>
            <person name="Keasling J.D."/>
        </authorList>
    </citation>
    <scope>FUNCTION</scope>
    <scope>CATALYTIC ACTIVITY</scope>
</reference>
<reference key="7">
    <citation type="journal article" date="2014" name="Mol. Cell">
        <title>Polyphosphate is a primordial chaperone.</title>
        <authorList>
            <person name="Gray M.J."/>
            <person name="Wholey W.Y."/>
            <person name="Wagner N.O."/>
            <person name="Cremers C.M."/>
            <person name="Mueller-Schickert A."/>
            <person name="Hock N.T."/>
            <person name="Krieger A.G."/>
            <person name="Smith E.M."/>
            <person name="Bender R.A."/>
            <person name="Bardwell J.C."/>
            <person name="Jakob U."/>
        </authorList>
    </citation>
    <scope>ACTIVITY REGULATION</scope>
    <scope>DISRUPTION PHENOTYPE</scope>
</reference>
<reference evidence="8" key="8">
    <citation type="journal article" date="2006" name="Structure">
        <title>Origin of exopolyphosphatase processivity: fusion of an ASKHA phosphotransferase and a cyclic nucleotide phosphodiesterase homolog.</title>
        <authorList>
            <person name="Alvarado J."/>
            <person name="Ghosh A."/>
            <person name="Janovitz T."/>
            <person name="Jauregui A."/>
            <person name="Hasson M.S."/>
            <person name="Sanders D.A."/>
        </authorList>
    </citation>
    <scope>X-RAY CRYSTALLOGRAPHY (1.90 ANGSTROMS)</scope>
    <scope>FUNCTION</scope>
    <scope>CATALYTIC ACTIVITY</scope>
    <scope>SUBUNIT</scope>
    <scope>MUTAGENESIS OF GLU-121; ASP-143; GLU-150 AND GLU-371</scope>
</reference>
<evidence type="ECO:0000269" key="1">
    <source>
    </source>
</evidence>
<evidence type="ECO:0000269" key="2">
    <source>
    </source>
</evidence>
<evidence type="ECO:0000269" key="3">
    <source>
    </source>
</evidence>
<evidence type="ECO:0000269" key="4">
    <source>
    </source>
</evidence>
<evidence type="ECO:0000303" key="5">
    <source>
    </source>
</evidence>
<evidence type="ECO:0000305" key="6"/>
<evidence type="ECO:0000305" key="7">
    <source>
    </source>
</evidence>
<evidence type="ECO:0007744" key="8">
    <source>
        <dbReference type="PDB" id="1U6Z"/>
    </source>
</evidence>
<evidence type="ECO:0007829" key="9">
    <source>
        <dbReference type="PDB" id="1U6Z"/>
    </source>
</evidence>
<keyword id="KW-0002">3D-structure</keyword>
<keyword id="KW-1003">Cell membrane</keyword>
<keyword id="KW-0903">Direct protein sequencing</keyword>
<keyword id="KW-0378">Hydrolase</keyword>
<keyword id="KW-0460">Magnesium</keyword>
<keyword id="KW-0472">Membrane</keyword>
<keyword id="KW-1185">Reference proteome</keyword>
<feature type="initiator methionine" description="Removed" evidence="3">
    <location>
        <position position="1"/>
    </location>
</feature>
<feature type="chain" id="PRO_0000194299" description="Exopolyphosphatase">
    <location>
        <begin position="2"/>
        <end position="513"/>
    </location>
</feature>
<feature type="mutagenesis site" description="Almost loss of activity." evidence="1">
    <original>E</original>
    <variation>A</variation>
    <location>
        <position position="121"/>
    </location>
</feature>
<feature type="mutagenesis site" description="Almost loss of activity." evidence="1">
    <original>D</original>
    <variation>A</variation>
    <location>
        <position position="143"/>
    </location>
</feature>
<feature type="mutagenesis site" description="Almost loss of activity." evidence="1">
    <original>E</original>
    <variation>A</variation>
    <location>
        <position position="150"/>
    </location>
</feature>
<feature type="mutagenesis site" description="Decrease in activity." evidence="1">
    <original>E</original>
    <variation>A</variation>
    <location>
        <position position="371"/>
    </location>
</feature>
<feature type="strand" evidence="9">
    <location>
        <begin position="13"/>
        <end position="18"/>
    </location>
</feature>
<feature type="strand" evidence="9">
    <location>
        <begin position="23"/>
        <end position="31"/>
    </location>
</feature>
<feature type="strand" evidence="9">
    <location>
        <begin position="34"/>
        <end position="43"/>
    </location>
</feature>
<feature type="helix" evidence="9">
    <location>
        <begin position="48"/>
        <end position="50"/>
    </location>
</feature>
<feature type="helix" evidence="9">
    <location>
        <begin position="59"/>
        <end position="75"/>
    </location>
</feature>
<feature type="turn" evidence="9">
    <location>
        <begin position="76"/>
        <end position="78"/>
    </location>
</feature>
<feature type="helix" evidence="9">
    <location>
        <begin position="81"/>
        <end position="83"/>
    </location>
</feature>
<feature type="strand" evidence="9">
    <location>
        <begin position="84"/>
        <end position="88"/>
    </location>
</feature>
<feature type="helix" evidence="9">
    <location>
        <begin position="90"/>
        <end position="94"/>
    </location>
</feature>
<feature type="helix" evidence="9">
    <location>
        <begin position="98"/>
        <end position="105"/>
    </location>
</feature>
<feature type="turn" evidence="9">
    <location>
        <begin position="106"/>
        <end position="108"/>
    </location>
</feature>
<feature type="strand" evidence="9">
    <location>
        <begin position="113"/>
        <end position="115"/>
    </location>
</feature>
<feature type="helix" evidence="9">
    <location>
        <begin position="118"/>
        <end position="132"/>
    </location>
</feature>
<feature type="strand" evidence="9">
    <location>
        <begin position="139"/>
        <end position="144"/>
    </location>
</feature>
<feature type="strand" evidence="9">
    <location>
        <begin position="149"/>
        <end position="155"/>
    </location>
</feature>
<feature type="strand" evidence="9">
    <location>
        <begin position="158"/>
        <end position="166"/>
    </location>
</feature>
<feature type="helix" evidence="9">
    <location>
        <begin position="169"/>
        <end position="176"/>
    </location>
</feature>
<feature type="helix" evidence="9">
    <location>
        <begin position="178"/>
        <end position="180"/>
    </location>
</feature>
<feature type="helix" evidence="9">
    <location>
        <begin position="184"/>
        <end position="198"/>
    </location>
</feature>
<feature type="turn" evidence="9">
    <location>
        <begin position="199"/>
        <end position="201"/>
    </location>
</feature>
<feature type="helix" evidence="9">
    <location>
        <begin position="202"/>
        <end position="208"/>
    </location>
</feature>
<feature type="strand" evidence="9">
    <location>
        <begin position="211"/>
        <end position="217"/>
    </location>
</feature>
<feature type="helix" evidence="9">
    <location>
        <begin position="218"/>
        <end position="229"/>
    </location>
</feature>
<feature type="strand" evidence="9">
    <location>
        <begin position="233"/>
        <end position="235"/>
    </location>
</feature>
<feature type="helix" evidence="9">
    <location>
        <begin position="239"/>
        <end position="249"/>
    </location>
</feature>
<feature type="helix" evidence="9">
    <location>
        <begin position="255"/>
        <end position="257"/>
    </location>
</feature>
<feature type="helix" evidence="9">
    <location>
        <begin position="267"/>
        <end position="269"/>
    </location>
</feature>
<feature type="helix" evidence="9">
    <location>
        <begin position="271"/>
        <end position="285"/>
    </location>
</feature>
<feature type="strand" evidence="9">
    <location>
        <begin position="290"/>
        <end position="292"/>
    </location>
</feature>
<feature type="helix" evidence="9">
    <location>
        <begin position="297"/>
        <end position="309"/>
    </location>
</feature>
<feature type="helix" evidence="9">
    <location>
        <begin position="314"/>
        <end position="325"/>
    </location>
</feature>
<feature type="helix" evidence="9">
    <location>
        <begin position="330"/>
        <end position="350"/>
    </location>
</feature>
<feature type="helix" evidence="9">
    <location>
        <begin position="352"/>
        <end position="354"/>
    </location>
</feature>
<feature type="helix" evidence="9">
    <location>
        <begin position="357"/>
        <end position="369"/>
    </location>
</feature>
<feature type="turn" evidence="9">
    <location>
        <begin position="370"/>
        <end position="376"/>
    </location>
</feature>
<feature type="helix" evidence="9">
    <location>
        <begin position="381"/>
        <end position="391"/>
    </location>
</feature>
<feature type="helix" evidence="9">
    <location>
        <begin position="399"/>
        <end position="410"/>
    </location>
</feature>
<feature type="strand" evidence="9">
    <location>
        <begin position="412"/>
        <end position="414"/>
    </location>
</feature>
<feature type="helix" evidence="9">
    <location>
        <begin position="429"/>
        <end position="444"/>
    </location>
</feature>
<feature type="turn" evidence="9">
    <location>
        <begin position="445"/>
        <end position="448"/>
    </location>
</feature>
<feature type="helix" evidence="9">
    <location>
        <begin position="449"/>
        <end position="451"/>
    </location>
</feature>
<feature type="strand" evidence="9">
    <location>
        <begin position="459"/>
        <end position="463"/>
    </location>
</feature>
<feature type="strand" evidence="9">
    <location>
        <begin position="466"/>
        <end position="471"/>
    </location>
</feature>
<feature type="helix" evidence="9">
    <location>
        <begin position="475"/>
        <end position="478"/>
    </location>
</feature>
<feature type="helix" evidence="9">
    <location>
        <begin position="480"/>
        <end position="493"/>
    </location>
</feature>
<feature type="strand" evidence="9">
    <location>
        <begin position="500"/>
        <end position="505"/>
    </location>
</feature>
<protein>
    <recommendedName>
        <fullName evidence="5">Exopolyphosphatase</fullName>
        <shortName evidence="6">ExopolyPase</shortName>
        <ecNumber evidence="3">3.6.1.11</ecNumber>
    </recommendedName>
    <alternativeName>
        <fullName>Metaphosphatase</fullName>
    </alternativeName>
</protein>
<name>PPX_ECOLI</name>
<comment type="function">
    <text evidence="1 3 4">Degradation of inorganic polyphosphates (polyP). Releases orthophosphate processively from the ends of the polyP chain. Has a strong preference for long-chain polyphosphates and has only weak affinity for smaller size polyP of about 15 residues.</text>
</comment>
<comment type="catalytic activity">
    <reaction evidence="1 3 4">
        <text>[phosphate](n) + H2O = [phosphate](n-1) + phosphate + H(+)</text>
        <dbReference type="Rhea" id="RHEA:21528"/>
        <dbReference type="Rhea" id="RHEA-COMP:9859"/>
        <dbReference type="Rhea" id="RHEA-COMP:14279"/>
        <dbReference type="ChEBI" id="CHEBI:15377"/>
        <dbReference type="ChEBI" id="CHEBI:15378"/>
        <dbReference type="ChEBI" id="CHEBI:16838"/>
        <dbReference type="ChEBI" id="CHEBI:43474"/>
        <dbReference type="EC" id="3.6.1.11"/>
    </reaction>
</comment>
<comment type="cofactor">
    <cofactor evidence="3">
        <name>Mg(2+)</name>
        <dbReference type="ChEBI" id="CHEBI:18420"/>
    </cofactor>
</comment>
<comment type="activity regulation">
    <text evidence="2 3">Activity is redox-regulated. Highly sensitive to inactivation by oxidation (PubMed:24560923). Strongly stimulated by potassium salts (PubMed:8380170).</text>
</comment>
<comment type="biophysicochemical properties">
    <phDependence>
        <text evidence="3">Optimum pH is 8.</text>
    </phDependence>
</comment>
<comment type="subunit">
    <text evidence="1 3">Homodimer.</text>
</comment>
<comment type="interaction">
    <interactant intactId="EBI-551996">
        <id>P0AFL6</id>
    </interactant>
    <interactant intactId="EBI-551996">
        <id>P0AFL6</id>
        <label>ppx</label>
    </interactant>
    <organismsDiffer>false</organismsDiffer>
    <experiments>2</experiments>
</comment>
<comment type="subcellular location">
    <subcellularLocation>
        <location evidence="7">Cell membrane</location>
        <topology evidence="7">Peripheral membrane protein</topology>
    </subcellularLocation>
</comment>
<comment type="disruption phenotype">
    <text evidence="2">Deletion mutant accumulates polyP.</text>
</comment>
<comment type="similarity">
    <text evidence="6">Belongs to the GppA/Ppx family.</text>
</comment>
<organism>
    <name type="scientific">Escherichia coli (strain K12)</name>
    <dbReference type="NCBI Taxonomy" id="83333"/>
    <lineage>
        <taxon>Bacteria</taxon>
        <taxon>Pseudomonadati</taxon>
        <taxon>Pseudomonadota</taxon>
        <taxon>Gammaproteobacteria</taxon>
        <taxon>Enterobacterales</taxon>
        <taxon>Enterobacteriaceae</taxon>
        <taxon>Escherichia</taxon>
    </lineage>
</organism>
<sequence length="513" mass="58136">MPIHDKSPRPQEFAAVDLGSNSFHMVIARVVDGAMQIIGRLKQRVHLADGLGPDNMLSEEAMTRGLNCLSLFAERLQGFSPASVCIVGTHTLRQALNATDFLKRAEKVIPYPIEIISGNEEARLIFMGVEHTQPEKGRKLVIDIGGGSTELVIGENFEPILVESRRMGCVSFAQLYFPGGVINKENFQRARMAAAQKLETLTWQFRIQGWNVAMGASGTIKAAHEVLMEMGEKDGIITPERLEKLVKEVLRHRNFASLSLPGLSEERKTVFVPGLAILCGVFDALAIRELRLSDGALREGVLYEMEGRFRHQDVRSRTASSLANQYHIDSEQARRVLDTTMQMYEQWREQQPKLAHPQLEALLRWAAMLHEVGLNINHSGLHRHSAYILQNSDLPGFNQEQQLMMATLVRYHRKAIKLDDLPRFTLFKKKQFLPLIQLLRLGVLLNNQRQATTTPPTLTLITDDSHWTLRFPHDWFSQNALVLLDLEKEQEYWEGVAGWRLKIEEESTPEIAA</sequence>